<protein>
    <recommendedName>
        <fullName>Nucleoprotein</fullName>
    </recommendedName>
    <alternativeName>
        <fullName>Nucleocapsid protein</fullName>
        <shortName>Protein N</shortName>
    </alternativeName>
</protein>
<organismHost>
    <name type="scientific">Frankliniella occidentalis</name>
    <name type="common">Western flower thrips</name>
    <name type="synonym">Euthrips occidentalis</name>
    <dbReference type="NCBI Taxonomy" id="133901"/>
</organismHost>
<organismHost>
    <name type="scientific">Scirtothrips dorsalis</name>
    <name type="common">Chilli thrips</name>
    <dbReference type="NCBI Taxonomy" id="163899"/>
</organismHost>
<organismHost>
    <name type="scientific">Solanum lycopersicum</name>
    <name type="common">Tomato</name>
    <name type="synonym">Lycopersicon esculentum</name>
    <dbReference type="NCBI Taxonomy" id="4081"/>
</organismHost>
<organismHost>
    <name type="scientific">Thrips tabaci</name>
    <dbReference type="NCBI Taxonomy" id="161014"/>
</organismHost>
<proteinExistence type="inferred from homology"/>
<dbReference type="EMBL" id="S54325">
    <property type="protein sequence ID" value="AAB25256.1"/>
    <property type="molecule type" value="Genomic_RNA"/>
</dbReference>
<dbReference type="SMR" id="P36293"/>
<dbReference type="GO" id="GO:0019029">
    <property type="term" value="C:helical viral capsid"/>
    <property type="evidence" value="ECO:0007669"/>
    <property type="project" value="UniProtKB-KW"/>
</dbReference>
<dbReference type="GO" id="GO:1990904">
    <property type="term" value="C:ribonucleoprotein complex"/>
    <property type="evidence" value="ECO:0007669"/>
    <property type="project" value="UniProtKB-KW"/>
</dbReference>
<dbReference type="GO" id="GO:0019013">
    <property type="term" value="C:viral nucleocapsid"/>
    <property type="evidence" value="ECO:0007669"/>
    <property type="project" value="UniProtKB-KW"/>
</dbReference>
<dbReference type="GO" id="GO:0003723">
    <property type="term" value="F:RNA binding"/>
    <property type="evidence" value="ECO:0007669"/>
    <property type="project" value="UniProtKB-KW"/>
</dbReference>
<dbReference type="InterPro" id="IPR002517">
    <property type="entry name" value="Tospo_nucleocap"/>
</dbReference>
<dbReference type="Pfam" id="PF01533">
    <property type="entry name" value="Tospo_nucleocap"/>
    <property type="match status" value="1"/>
</dbReference>
<dbReference type="PIRSF" id="PIRSF003948">
    <property type="entry name" value="N_TospoV"/>
    <property type="match status" value="1"/>
</dbReference>
<accession>P36293</accession>
<gene>
    <name type="primary">N</name>
</gene>
<feature type="chain" id="PRO_0000222002" description="Nucleoprotein">
    <location>
        <begin position="1"/>
        <end position="258"/>
    </location>
</feature>
<comment type="function">
    <text evidence="1">Encapsidates the genome protecting it from nucleases. The encapsidated genomic RNA is termed the nucleocapsid (NC) and serves as template for transcription and replication. The NC have a helical organization.</text>
</comment>
<comment type="subunit">
    <text evidence="1">Homotrimer. Binds the viral genomic RNA.</text>
</comment>
<comment type="subcellular location">
    <subcellularLocation>
        <location evidence="1">Virion</location>
    </subcellularLocation>
    <text evidence="1">Located inside the virion, complexed with the viral RNA.</text>
</comment>
<comment type="domain">
    <text evidence="1">The N-terminus and C-terminus are involved in homooligomerization and play an essential role in viral RNA synthesis.</text>
</comment>
<comment type="similarity">
    <text evidence="2">Belongs to the tospovirus nucleocapsid protein family.</text>
</comment>
<reference key="1">
    <citation type="journal article" date="1993" name="J. Gen. Virol.">
        <title>Classification of tospoviruses based on phylogeny of nucleoprotein gene sequences.</title>
        <authorList>
            <person name="de Avila A.C."/>
            <person name="de Haan P."/>
            <person name="Kormelink R."/>
            <person name="Resende R.O."/>
            <person name="Goldbach R.W."/>
            <person name="Peters D."/>
        </authorList>
    </citation>
    <scope>NUCLEOTIDE SEQUENCE [GENOMIC RNA]</scope>
</reference>
<keyword id="KW-0167">Capsid protein</keyword>
<keyword id="KW-1139">Helical capsid protein</keyword>
<keyword id="KW-0687">Ribonucleoprotein</keyword>
<keyword id="KW-0694">RNA-binding</keyword>
<keyword id="KW-0543">Viral nucleoprotein</keyword>
<keyword id="KW-0946">Virion</keyword>
<sequence length="258" mass="28677">MSKVKLTRENIISLLTQAGEIEFEEDQIKATFNFEDFCGENLDSIKKMSITSCLTFLKNRQSIMKVVNLCDFTFGKITIKKNSGRVGANDMTFRRLDSMIRVKLIEETGKAENLAIIKSKIASHPLVQAYGLPLTDAKSVRLAIMLGGSIPLIASVDSFEMISIILAIYQDAKYKDLGIEPSKYNTKEALGKVCTVLKSKGFTMDEEQVQKGKEYATILSSCNPNAKGSIAMEHYSEHLDKFYAMFGVRKEAKISGVA</sequence>
<evidence type="ECO:0000250" key="1">
    <source>
        <dbReference type="UniProtKB" id="P16495"/>
    </source>
</evidence>
<evidence type="ECO:0000305" key="2"/>
<organism>
    <name type="scientific">Tomato spotted wilt virus (strain Brazilian Br-03)</name>
    <name type="common">TSWV</name>
    <name type="synonym">Tomato chlorotic spot virus</name>
    <dbReference type="NCBI Taxonomy" id="12851"/>
    <lineage>
        <taxon>Viruses</taxon>
        <taxon>Riboviria</taxon>
        <taxon>Orthornavirae</taxon>
        <taxon>Negarnaviricota</taxon>
        <taxon>Polyploviricotina</taxon>
        <taxon>Ellioviricetes</taxon>
        <taxon>Bunyavirales</taxon>
        <taxon>Tospoviridae</taxon>
        <taxon>Orthotospovirus</taxon>
        <taxon>Orthotospovirus tomatoflavi</taxon>
    </lineage>
</organism>
<name>NCAP_TSWV3</name>